<name>PFDA_NATPD</name>
<proteinExistence type="inferred from homology"/>
<organism>
    <name type="scientific">Natronomonas pharaonis (strain ATCC 35678 / DSM 2160 / CIP 103997 / JCM 8858 / NBRC 14720 / NCIMB 2260 / Gabara)</name>
    <name type="common">Halobacterium pharaonis</name>
    <dbReference type="NCBI Taxonomy" id="348780"/>
    <lineage>
        <taxon>Archaea</taxon>
        <taxon>Methanobacteriati</taxon>
        <taxon>Methanobacteriota</taxon>
        <taxon>Stenosarchaea group</taxon>
        <taxon>Halobacteria</taxon>
        <taxon>Halobacteriales</taxon>
        <taxon>Haloarculaceae</taxon>
        <taxon>Natronomonas</taxon>
    </lineage>
</organism>
<protein>
    <recommendedName>
        <fullName evidence="1">Prefoldin subunit alpha</fullName>
    </recommendedName>
    <alternativeName>
        <fullName evidence="1">GimC subunit alpha</fullName>
    </alternativeName>
</protein>
<reference key="1">
    <citation type="journal article" date="2005" name="Genome Res.">
        <title>Living with two extremes: conclusions from the genome sequence of Natronomonas pharaonis.</title>
        <authorList>
            <person name="Falb M."/>
            <person name="Pfeiffer F."/>
            <person name="Palm P."/>
            <person name="Rodewald K."/>
            <person name="Hickmann V."/>
            <person name="Tittor J."/>
            <person name="Oesterhelt D."/>
        </authorList>
    </citation>
    <scope>NUCLEOTIDE SEQUENCE [LARGE SCALE GENOMIC DNA]</scope>
    <source>
        <strain>ATCC 35678 / DSM 2160 / CIP 103997 / JCM 8858 / NBRC 14720 / NCIMB 2260 / Gabara</strain>
    </source>
</reference>
<evidence type="ECO:0000255" key="1">
    <source>
        <dbReference type="HAMAP-Rule" id="MF_00308"/>
    </source>
</evidence>
<evidence type="ECO:0000256" key="2">
    <source>
        <dbReference type="SAM" id="MobiDB-lite"/>
    </source>
</evidence>
<evidence type="ECO:0000305" key="3"/>
<feature type="chain" id="PRO_0000300768" description="Prefoldin subunit alpha">
    <location>
        <begin position="1"/>
        <end position="151"/>
    </location>
</feature>
<feature type="region of interest" description="Disordered" evidence="2">
    <location>
        <begin position="120"/>
        <end position="151"/>
    </location>
</feature>
<feature type="compositionally biased region" description="Low complexity" evidence="2">
    <location>
        <begin position="133"/>
        <end position="151"/>
    </location>
</feature>
<gene>
    <name evidence="1" type="primary">pfdA</name>
    <name type="ordered locus">NP_0184A</name>
</gene>
<sequence>MSLGGGGGGGAMEQIQQQLQALEQEKQAIQAEIENVRDEQSEIDEAIEAIETLETGATVQVPLGGDAYVRATIEDMDEVVVTLGGGYAAERDSEGAVESLERKKETLDDRIEELEGEIETVEEETASLEEKAQQAQQQQMQQLQQMQQEDE</sequence>
<keyword id="KW-0143">Chaperone</keyword>
<keyword id="KW-0963">Cytoplasm</keyword>
<keyword id="KW-1185">Reference proteome</keyword>
<comment type="function">
    <text evidence="1">Molecular chaperone capable of stabilizing a range of proteins. Seems to fulfill an ATP-independent, HSP70-like function in archaeal de novo protein folding.</text>
</comment>
<comment type="subunit">
    <text evidence="1">Heterohexamer of two alpha and four beta subunits.</text>
</comment>
<comment type="subcellular location">
    <subcellularLocation>
        <location evidence="1">Cytoplasm</location>
    </subcellularLocation>
</comment>
<comment type="similarity">
    <text evidence="3">Belongs to the prefoldin subunit alpha family.</text>
</comment>
<accession>Q3IUJ7</accession>
<dbReference type="EMBL" id="CR936257">
    <property type="protein sequence ID" value="CAI48183.1"/>
    <property type="molecule type" value="Genomic_DNA"/>
</dbReference>
<dbReference type="RefSeq" id="WP_011321822.1">
    <property type="nucleotide sequence ID" value="NC_007426.1"/>
</dbReference>
<dbReference type="SMR" id="Q3IUJ7"/>
<dbReference type="STRING" id="348780.NP_0184A"/>
<dbReference type="EnsemblBacteria" id="CAI48183">
    <property type="protein sequence ID" value="CAI48183"/>
    <property type="gene ID" value="NP_0184A"/>
</dbReference>
<dbReference type="GeneID" id="3703017"/>
<dbReference type="KEGG" id="nph:NP_0184A"/>
<dbReference type="eggNOG" id="arCOG01341">
    <property type="taxonomic scope" value="Archaea"/>
</dbReference>
<dbReference type="HOGENOM" id="CLU_091867_1_3_2"/>
<dbReference type="OrthoDB" id="10045at2157"/>
<dbReference type="Proteomes" id="UP000002698">
    <property type="component" value="Chromosome"/>
</dbReference>
<dbReference type="GO" id="GO:0005737">
    <property type="term" value="C:cytoplasm"/>
    <property type="evidence" value="ECO:0007669"/>
    <property type="project" value="UniProtKB-SubCell"/>
</dbReference>
<dbReference type="GO" id="GO:0016272">
    <property type="term" value="C:prefoldin complex"/>
    <property type="evidence" value="ECO:0007669"/>
    <property type="project" value="UniProtKB-UniRule"/>
</dbReference>
<dbReference type="GO" id="GO:0051082">
    <property type="term" value="F:unfolded protein binding"/>
    <property type="evidence" value="ECO:0007669"/>
    <property type="project" value="UniProtKB-UniRule"/>
</dbReference>
<dbReference type="GO" id="GO:0006457">
    <property type="term" value="P:protein folding"/>
    <property type="evidence" value="ECO:0007669"/>
    <property type="project" value="UniProtKB-UniRule"/>
</dbReference>
<dbReference type="CDD" id="cd00584">
    <property type="entry name" value="Prefoldin_alpha"/>
    <property type="match status" value="1"/>
</dbReference>
<dbReference type="Gene3D" id="1.10.287.370">
    <property type="match status" value="1"/>
</dbReference>
<dbReference type="HAMAP" id="MF_00308">
    <property type="entry name" value="PfdA"/>
    <property type="match status" value="1"/>
</dbReference>
<dbReference type="InterPro" id="IPR011599">
    <property type="entry name" value="PFD_alpha_archaea"/>
</dbReference>
<dbReference type="InterPro" id="IPR009053">
    <property type="entry name" value="Prefoldin"/>
</dbReference>
<dbReference type="InterPro" id="IPR004127">
    <property type="entry name" value="Prefoldin_subunit_alpha"/>
</dbReference>
<dbReference type="NCBIfam" id="TIGR00293">
    <property type="entry name" value="prefoldin subunit alpha"/>
    <property type="match status" value="1"/>
</dbReference>
<dbReference type="PANTHER" id="PTHR12674">
    <property type="entry name" value="PREFOLDIN SUBUNIT 5"/>
    <property type="match status" value="1"/>
</dbReference>
<dbReference type="PANTHER" id="PTHR12674:SF2">
    <property type="entry name" value="PREFOLDIN SUBUNIT 5"/>
    <property type="match status" value="1"/>
</dbReference>
<dbReference type="Pfam" id="PF02996">
    <property type="entry name" value="Prefoldin"/>
    <property type="match status" value="1"/>
</dbReference>
<dbReference type="SUPFAM" id="SSF46579">
    <property type="entry name" value="Prefoldin"/>
    <property type="match status" value="1"/>
</dbReference>